<organism>
    <name type="scientific">Thermus thermophilus (strain ATCC BAA-163 / DSM 7039 / HB27)</name>
    <dbReference type="NCBI Taxonomy" id="262724"/>
    <lineage>
        <taxon>Bacteria</taxon>
        <taxon>Thermotogati</taxon>
        <taxon>Deinococcota</taxon>
        <taxon>Deinococci</taxon>
        <taxon>Thermales</taxon>
        <taxon>Thermaceae</taxon>
        <taxon>Thermus</taxon>
    </lineage>
</organism>
<sequence>MAEPGIDKLFGMVDSKYRLTVVVAKRAQQLLRHGFKNTVLEPEERPKMQTLEGLFDDPNAVTWAMKELLTGRLVFGENLVPEDRLQKEMERLYPVEREE</sequence>
<accession>Q72ID6</accession>
<comment type="function">
    <text evidence="1">Promotes RNA polymerase assembly. Latches the N- and C-terminal regions of the beta' subunit thereby facilitating its interaction with the beta and alpha subunits.</text>
</comment>
<comment type="catalytic activity">
    <reaction evidence="1">
        <text>RNA(n) + a ribonucleoside 5'-triphosphate = RNA(n+1) + diphosphate</text>
        <dbReference type="Rhea" id="RHEA:21248"/>
        <dbReference type="Rhea" id="RHEA-COMP:14527"/>
        <dbReference type="Rhea" id="RHEA-COMP:17342"/>
        <dbReference type="ChEBI" id="CHEBI:33019"/>
        <dbReference type="ChEBI" id="CHEBI:61557"/>
        <dbReference type="ChEBI" id="CHEBI:140395"/>
        <dbReference type="EC" id="2.7.7.6"/>
    </reaction>
</comment>
<comment type="subunit">
    <text evidence="1">The RNAP catalytic core consists of 2 alpha, 1 beta, 1 beta' and 1 omega subunit. When a sigma factor is associated with the core the holoenzyme is formed, which can initiate transcription.</text>
</comment>
<comment type="similarity">
    <text evidence="1">Belongs to the RNA polymerase subunit omega family.</text>
</comment>
<feature type="chain" id="PRO_0000237524" description="DNA-directed RNA polymerase subunit omega">
    <location>
        <begin position="1"/>
        <end position="99"/>
    </location>
</feature>
<gene>
    <name evidence="1" type="primary">rpoZ</name>
    <name type="ordered locus">TT_C1196</name>
</gene>
<proteinExistence type="inferred from homology"/>
<evidence type="ECO:0000255" key="1">
    <source>
        <dbReference type="HAMAP-Rule" id="MF_00366"/>
    </source>
</evidence>
<dbReference type="EC" id="2.7.7.6" evidence="1"/>
<dbReference type="EMBL" id="AE017221">
    <property type="protein sequence ID" value="AAS81538.1"/>
    <property type="molecule type" value="Genomic_DNA"/>
</dbReference>
<dbReference type="RefSeq" id="WP_008633185.1">
    <property type="nucleotide sequence ID" value="NC_005835.1"/>
</dbReference>
<dbReference type="SMR" id="Q72ID6"/>
<dbReference type="GeneID" id="3169896"/>
<dbReference type="KEGG" id="tth:TT_C1196"/>
<dbReference type="eggNOG" id="COG1758">
    <property type="taxonomic scope" value="Bacteria"/>
</dbReference>
<dbReference type="HOGENOM" id="CLU_2319205_0_0_0"/>
<dbReference type="OrthoDB" id="26069at2"/>
<dbReference type="Proteomes" id="UP000000592">
    <property type="component" value="Chromosome"/>
</dbReference>
<dbReference type="GO" id="GO:0000428">
    <property type="term" value="C:DNA-directed RNA polymerase complex"/>
    <property type="evidence" value="ECO:0007669"/>
    <property type="project" value="UniProtKB-KW"/>
</dbReference>
<dbReference type="GO" id="GO:0003677">
    <property type="term" value="F:DNA binding"/>
    <property type="evidence" value="ECO:0007669"/>
    <property type="project" value="UniProtKB-UniRule"/>
</dbReference>
<dbReference type="GO" id="GO:0003899">
    <property type="term" value="F:DNA-directed RNA polymerase activity"/>
    <property type="evidence" value="ECO:0007669"/>
    <property type="project" value="UniProtKB-UniRule"/>
</dbReference>
<dbReference type="GO" id="GO:0006351">
    <property type="term" value="P:DNA-templated transcription"/>
    <property type="evidence" value="ECO:0007669"/>
    <property type="project" value="UniProtKB-UniRule"/>
</dbReference>
<dbReference type="Gene3D" id="3.90.940.10">
    <property type="match status" value="1"/>
</dbReference>
<dbReference type="HAMAP" id="MF_00366">
    <property type="entry name" value="RNApol_bact_RpoZ"/>
    <property type="match status" value="1"/>
</dbReference>
<dbReference type="InterPro" id="IPR003716">
    <property type="entry name" value="DNA-dir_RNA_pol_omega"/>
</dbReference>
<dbReference type="InterPro" id="IPR006110">
    <property type="entry name" value="Pol_omega/Rpo6/RPB6"/>
</dbReference>
<dbReference type="InterPro" id="IPR036161">
    <property type="entry name" value="RPB6/omega-like_sf"/>
</dbReference>
<dbReference type="NCBIfam" id="TIGR00690">
    <property type="entry name" value="rpoZ"/>
    <property type="match status" value="1"/>
</dbReference>
<dbReference type="Pfam" id="PF01192">
    <property type="entry name" value="RNA_pol_Rpb6"/>
    <property type="match status" value="1"/>
</dbReference>
<dbReference type="SMART" id="SM01409">
    <property type="entry name" value="RNA_pol_Rpb6"/>
    <property type="match status" value="1"/>
</dbReference>
<dbReference type="SUPFAM" id="SSF63562">
    <property type="entry name" value="RPB6/omega subunit-like"/>
    <property type="match status" value="1"/>
</dbReference>
<name>RPOZ_THET2</name>
<keyword id="KW-0240">DNA-directed RNA polymerase</keyword>
<keyword id="KW-0548">Nucleotidyltransferase</keyword>
<keyword id="KW-0804">Transcription</keyword>
<keyword id="KW-0808">Transferase</keyword>
<reference key="1">
    <citation type="journal article" date="2004" name="Nat. Biotechnol.">
        <title>The genome sequence of the extreme thermophile Thermus thermophilus.</title>
        <authorList>
            <person name="Henne A."/>
            <person name="Brueggemann H."/>
            <person name="Raasch C."/>
            <person name="Wiezer A."/>
            <person name="Hartsch T."/>
            <person name="Liesegang H."/>
            <person name="Johann A."/>
            <person name="Lienard T."/>
            <person name="Gohl O."/>
            <person name="Martinez-Arias R."/>
            <person name="Jacobi C."/>
            <person name="Starkuviene V."/>
            <person name="Schlenczeck S."/>
            <person name="Dencker S."/>
            <person name="Huber R."/>
            <person name="Klenk H.-P."/>
            <person name="Kramer W."/>
            <person name="Merkl R."/>
            <person name="Gottschalk G."/>
            <person name="Fritz H.-J."/>
        </authorList>
    </citation>
    <scope>NUCLEOTIDE SEQUENCE [LARGE SCALE GENOMIC DNA]</scope>
    <source>
        <strain>ATCC BAA-163 / DSM 7039 / HB27</strain>
    </source>
</reference>
<protein>
    <recommendedName>
        <fullName evidence="1">DNA-directed RNA polymerase subunit omega</fullName>
        <shortName evidence="1">RNAP omega subunit</shortName>
        <ecNumber evidence="1">2.7.7.6</ecNumber>
    </recommendedName>
    <alternativeName>
        <fullName evidence="1">RNA polymerase omega subunit</fullName>
    </alternativeName>
    <alternativeName>
        <fullName evidence="1">Transcriptase subunit omega</fullName>
    </alternativeName>
</protein>